<sequence length="1366" mass="149753">MTSSKPKKTSRVRKTTKNSKKNNPVTMPVLPKTPPSFKNKVVDKKALKNLVSWAYKTHGTAITSAMADNLKDLGFKYATQAAVSISVDDLKVPEAKQDLIGQAEEQISATEECYRLGEITEVERHTKVIDTWTETNERLVDAVKNNFNQNDPLNSVWMMANSGARGNMSQVRQLVGMRGLMANPQGEIIDLPIRTNFREGLTVTEYVISSYGARKGLVDTALRTADSGYLTRRLVDVAQDVIVREEDCGTELSIVVEAEDGKFGARLLGRLTAEDIFDAEENIVVSQNTAIDPSLSEEIEKASINKVKIRSPLTCEANRSVCRRCYGWALAHNHLVDLGEAVGIIAAQSIGEPGTQLTMRTFHTGGVSTAESGVVRSRISGKVEFSSKAKVRGYRTPHGVEAKQAEVDFTLKIVPQSNNSGKAQKIEVSSGSLLFVDDGEEINSDITVAQITAGAVKKSVEKATKDVICDLAGQVRYDKVIQPKEVTDRQGNITLKAQRLGRLWVLAGDVYNLPPNARPVISSGKNVDEGTVLAEASQSSEFGGQVRLRESIGDSREVQIVTTSMSLTNFKLIEESTHSGQIYNLESSDGTSYRLNISPGSKINSGEVIADLTDERFRTKTGGLIKYAPGLSVKKARSSKNGFEVSQGGTLLWIPQETHEINKDISLLMIEDMKWIEAGTEVVKDIFSQTSGIVTVTQKNDILREITVRNGNFYECDDEEVLNRFTEEGNLVNPGEKILDGVDNTEILFVQKLETSKCRGLLLRTVEEFTIPDQAELPQLSHVKQEKGPHLGLKAIQRLTYKDGELIKSVEGVELLRTHLSIESFDATPQMTIDVESIKDDKDESINRLNLVILESILVRRDTVSDASHGSTHTELQVNNNQLVKAGDVIATTQILCKEKGLVQLPNVVDDEPIRRLIVEREQDKIKVKISDKAVVKVGDRVVDGDPITKTVKSTSCGEIEEISNSSVTLRLGRPYMVSPDSVLHVKDGDLVLRGDGLALLVFERQKTGDIVQGLPRIEELLEARRPRDSATLCKKSGIVQIKKGNDEESVSLSVIEKDDLVNEYQLLIGKNIMVSDGQQVTGGESLTDGPINPHELLDCYFNDLKDQKPLIDAARESISKLQRSMVSEVQNVYKSQGVAIDDKHIEVIVRQMTSKVRIEDAGDTTLLPGELIELRQVEDTNQAMAITGGAPAEFTPVLLGITKASLNTDSFISAASFQETTRVLTEAAIEGKSDWLRGLKENVIIGRLIPAGTGFSGFVEELSSEAGPHPDILAEESGGYRRAQNLRPDYTVDMPQSPAVSSTAILDDPSDEDLETTRNRHGIDPSSSNFAAFARPNAENQFSEDQLPDPAALEGLQEEGLLSDE</sequence>
<accession>A8G6Y4</accession>
<protein>
    <recommendedName>
        <fullName evidence="1">DNA-directed RNA polymerase subunit beta'</fullName>
        <shortName evidence="1">RNAP subunit beta'</shortName>
        <ecNumber evidence="1">2.7.7.6</ecNumber>
    </recommendedName>
    <alternativeName>
        <fullName evidence="1">RNA polymerase subunit beta'</fullName>
    </alternativeName>
    <alternativeName>
        <fullName evidence="1">Transcriptase subunit beta'</fullName>
    </alternativeName>
</protein>
<dbReference type="EC" id="2.7.7.6" evidence="1"/>
<dbReference type="EMBL" id="CP000825">
    <property type="protein sequence ID" value="ABV51365.1"/>
    <property type="molecule type" value="Genomic_DNA"/>
</dbReference>
<dbReference type="RefSeq" id="WP_012008383.1">
    <property type="nucleotide sequence ID" value="NC_009840.1"/>
</dbReference>
<dbReference type="SMR" id="A8G6Y4"/>
<dbReference type="STRING" id="93060.P9215_17521"/>
<dbReference type="KEGG" id="pmh:P9215_17521"/>
<dbReference type="eggNOG" id="COG0086">
    <property type="taxonomic scope" value="Bacteria"/>
</dbReference>
<dbReference type="HOGENOM" id="CLU_000524_1_0_3"/>
<dbReference type="OrthoDB" id="9815296at2"/>
<dbReference type="Proteomes" id="UP000002014">
    <property type="component" value="Chromosome"/>
</dbReference>
<dbReference type="GO" id="GO:0000428">
    <property type="term" value="C:DNA-directed RNA polymerase complex"/>
    <property type="evidence" value="ECO:0007669"/>
    <property type="project" value="UniProtKB-KW"/>
</dbReference>
<dbReference type="GO" id="GO:0003677">
    <property type="term" value="F:DNA binding"/>
    <property type="evidence" value="ECO:0007669"/>
    <property type="project" value="UniProtKB-UniRule"/>
</dbReference>
<dbReference type="GO" id="GO:0003899">
    <property type="term" value="F:DNA-directed RNA polymerase activity"/>
    <property type="evidence" value="ECO:0007669"/>
    <property type="project" value="UniProtKB-UniRule"/>
</dbReference>
<dbReference type="GO" id="GO:0008270">
    <property type="term" value="F:zinc ion binding"/>
    <property type="evidence" value="ECO:0007669"/>
    <property type="project" value="UniProtKB-UniRule"/>
</dbReference>
<dbReference type="GO" id="GO:0006351">
    <property type="term" value="P:DNA-templated transcription"/>
    <property type="evidence" value="ECO:0007669"/>
    <property type="project" value="UniProtKB-UniRule"/>
</dbReference>
<dbReference type="CDD" id="cd02655">
    <property type="entry name" value="RNAP_beta'_C"/>
    <property type="match status" value="1"/>
</dbReference>
<dbReference type="FunFam" id="1.10.150.390:FF:000002">
    <property type="entry name" value="DNA-directed RNA polymerase subunit beta"/>
    <property type="match status" value="1"/>
</dbReference>
<dbReference type="Gene3D" id="1.10.132.30">
    <property type="match status" value="1"/>
</dbReference>
<dbReference type="Gene3D" id="1.10.150.390">
    <property type="match status" value="1"/>
</dbReference>
<dbReference type="Gene3D" id="1.10.1790.20">
    <property type="match status" value="1"/>
</dbReference>
<dbReference type="Gene3D" id="2.40.50.100">
    <property type="match status" value="1"/>
</dbReference>
<dbReference type="Gene3D" id="1.10.274.100">
    <property type="entry name" value="RNA polymerase Rpb1, domain 3"/>
    <property type="match status" value="1"/>
</dbReference>
<dbReference type="HAMAP" id="MF_01324">
    <property type="entry name" value="RNApol_bact_RpoC2"/>
    <property type="match status" value="1"/>
</dbReference>
<dbReference type="InterPro" id="IPR012756">
    <property type="entry name" value="DNA-dir_RpoC2_beta_pp"/>
</dbReference>
<dbReference type="InterPro" id="IPR045867">
    <property type="entry name" value="DNA-dir_RpoC_beta_prime"/>
</dbReference>
<dbReference type="InterPro" id="IPR007066">
    <property type="entry name" value="RNA_pol_Rpb1_3"/>
</dbReference>
<dbReference type="InterPro" id="IPR042102">
    <property type="entry name" value="RNA_pol_Rpb1_3_sf"/>
</dbReference>
<dbReference type="InterPro" id="IPR007083">
    <property type="entry name" value="RNA_pol_Rpb1_4"/>
</dbReference>
<dbReference type="InterPro" id="IPR007081">
    <property type="entry name" value="RNA_pol_Rpb1_5"/>
</dbReference>
<dbReference type="InterPro" id="IPR038120">
    <property type="entry name" value="Rpb1_funnel_sf"/>
</dbReference>
<dbReference type="NCBIfam" id="NF002724">
    <property type="entry name" value="PRK02597.1"/>
    <property type="match status" value="1"/>
</dbReference>
<dbReference type="NCBIfam" id="TIGR02388">
    <property type="entry name" value="rpoC2_cyan"/>
    <property type="match status" value="1"/>
</dbReference>
<dbReference type="PANTHER" id="PTHR19376">
    <property type="entry name" value="DNA-DIRECTED RNA POLYMERASE"/>
    <property type="match status" value="1"/>
</dbReference>
<dbReference type="Pfam" id="PF04983">
    <property type="entry name" value="RNA_pol_Rpb1_3"/>
    <property type="match status" value="1"/>
</dbReference>
<dbReference type="Pfam" id="PF05000">
    <property type="entry name" value="RNA_pol_Rpb1_4"/>
    <property type="match status" value="1"/>
</dbReference>
<dbReference type="Pfam" id="PF04998">
    <property type="entry name" value="RNA_pol_Rpb1_5"/>
    <property type="match status" value="1"/>
</dbReference>
<dbReference type="SUPFAM" id="SSF64484">
    <property type="entry name" value="beta and beta-prime subunits of DNA dependent RNA-polymerase"/>
    <property type="match status" value="1"/>
</dbReference>
<organism>
    <name type="scientific">Prochlorococcus marinus (strain MIT 9215)</name>
    <dbReference type="NCBI Taxonomy" id="93060"/>
    <lineage>
        <taxon>Bacteria</taxon>
        <taxon>Bacillati</taxon>
        <taxon>Cyanobacteriota</taxon>
        <taxon>Cyanophyceae</taxon>
        <taxon>Synechococcales</taxon>
        <taxon>Prochlorococcaceae</taxon>
        <taxon>Prochlorococcus</taxon>
    </lineage>
</organism>
<proteinExistence type="inferred from homology"/>
<reference key="1">
    <citation type="journal article" date="2007" name="PLoS Genet.">
        <title>Patterns and implications of gene gain and loss in the evolution of Prochlorococcus.</title>
        <authorList>
            <person name="Kettler G.C."/>
            <person name="Martiny A.C."/>
            <person name="Huang K."/>
            <person name="Zucker J."/>
            <person name="Coleman M.L."/>
            <person name="Rodrigue S."/>
            <person name="Chen F."/>
            <person name="Lapidus A."/>
            <person name="Ferriera S."/>
            <person name="Johnson J."/>
            <person name="Steglich C."/>
            <person name="Church G.M."/>
            <person name="Richardson P."/>
            <person name="Chisholm S.W."/>
        </authorList>
    </citation>
    <scope>NUCLEOTIDE SEQUENCE [LARGE SCALE GENOMIC DNA]</scope>
    <source>
        <strain>MIT 9215</strain>
    </source>
</reference>
<gene>
    <name evidence="1" type="primary">rpoC2</name>
    <name type="ordered locus">P9215_17521</name>
</gene>
<feature type="chain" id="PRO_0000353526" description="DNA-directed RNA polymerase subunit beta'">
    <location>
        <begin position="1"/>
        <end position="1366"/>
    </location>
</feature>
<feature type="region of interest" description="Disordered" evidence="2">
    <location>
        <begin position="1"/>
        <end position="37"/>
    </location>
</feature>
<feature type="region of interest" description="Disordered" evidence="2">
    <location>
        <begin position="1292"/>
        <end position="1366"/>
    </location>
</feature>
<feature type="compositionally biased region" description="Basic residues" evidence="2">
    <location>
        <begin position="1"/>
        <end position="20"/>
    </location>
</feature>
<feature type="compositionally biased region" description="Low complexity" evidence="2">
    <location>
        <begin position="1354"/>
        <end position="1366"/>
    </location>
</feature>
<feature type="binding site" evidence="1">
    <location>
        <position position="248"/>
    </location>
    <ligand>
        <name>Zn(2+)</name>
        <dbReference type="ChEBI" id="CHEBI:29105"/>
    </ligand>
</feature>
<feature type="binding site" evidence="1">
    <location>
        <position position="315"/>
    </location>
    <ligand>
        <name>Zn(2+)</name>
        <dbReference type="ChEBI" id="CHEBI:29105"/>
    </ligand>
</feature>
<feature type="binding site" evidence="1">
    <location>
        <position position="322"/>
    </location>
    <ligand>
        <name>Zn(2+)</name>
        <dbReference type="ChEBI" id="CHEBI:29105"/>
    </ligand>
</feature>
<feature type="binding site" evidence="1">
    <location>
        <position position="325"/>
    </location>
    <ligand>
        <name>Zn(2+)</name>
        <dbReference type="ChEBI" id="CHEBI:29105"/>
    </ligand>
</feature>
<name>RPOC2_PROM2</name>
<evidence type="ECO:0000255" key="1">
    <source>
        <dbReference type="HAMAP-Rule" id="MF_01324"/>
    </source>
</evidence>
<evidence type="ECO:0000256" key="2">
    <source>
        <dbReference type="SAM" id="MobiDB-lite"/>
    </source>
</evidence>
<keyword id="KW-0240">DNA-directed RNA polymerase</keyword>
<keyword id="KW-0479">Metal-binding</keyword>
<keyword id="KW-0548">Nucleotidyltransferase</keyword>
<keyword id="KW-0804">Transcription</keyword>
<keyword id="KW-0808">Transferase</keyword>
<keyword id="KW-0862">Zinc</keyword>
<comment type="function">
    <text evidence="1">DNA-dependent RNA polymerase catalyzes the transcription of DNA into RNA using the four ribonucleoside triphosphates as substrates.</text>
</comment>
<comment type="catalytic activity">
    <reaction evidence="1">
        <text>RNA(n) + a ribonucleoside 5'-triphosphate = RNA(n+1) + diphosphate</text>
        <dbReference type="Rhea" id="RHEA:21248"/>
        <dbReference type="Rhea" id="RHEA-COMP:14527"/>
        <dbReference type="Rhea" id="RHEA-COMP:17342"/>
        <dbReference type="ChEBI" id="CHEBI:33019"/>
        <dbReference type="ChEBI" id="CHEBI:61557"/>
        <dbReference type="ChEBI" id="CHEBI:140395"/>
        <dbReference type="EC" id="2.7.7.6"/>
    </reaction>
</comment>
<comment type="cofactor">
    <cofactor evidence="1">
        <name>Zn(2+)</name>
        <dbReference type="ChEBI" id="CHEBI:29105"/>
    </cofactor>
    <text evidence="1">Binds 1 Zn(2+) ion per subunit.</text>
</comment>
<comment type="subunit">
    <text evidence="1">In cyanobacteria the RNAP catalytic core is composed of 2 alpha, 1 beta, 1 beta', 1 gamma and 1 omega subunit. When a sigma factor is associated with the core the holoenzyme is formed, which can initiate transcription.</text>
</comment>
<comment type="similarity">
    <text evidence="1">Belongs to the RNA polymerase beta' chain family. RpoC2 subfamily.</text>
</comment>